<sequence>MIKLTAQQIFDKLLDEEKILSANGQIRFFLGDVDIIVKQKDVVGNIIQEWLGGWLRKREIEFDVSTNTQMPPDFFLNKKDRSRELLEVKAFNRNASPGFDIADFKMYSDEIIHKPYMLDVDYLIFGYDMDDNGNVTIKDLWLKKVWQITRSMDGWAINLQVKKGVVHKIRPGVWYSINKKNMPMFECLEDFVSAIEETVYQNPATRHNASLWKRKFEEAYKKHYNRSISIPRWHEIAHKYKKK</sequence>
<protein>
    <recommendedName>
        <fullName evidence="1">Type II restriction enzyme NlaIV</fullName>
        <shortName evidence="2">R.NlaIV</shortName>
        <ecNumber>3.1.21.4</ecNumber>
    </recommendedName>
    <alternativeName>
        <fullName>Endonuclease NlaIV</fullName>
    </alternativeName>
    <alternativeName>
        <fullName>Type-2 restriction enzyme NlaIV</fullName>
    </alternativeName>
</protein>
<feature type="chain" id="PRO_0000077350" description="Type II restriction enzyme NlaIV">
    <location>
        <begin position="1"/>
        <end position="243"/>
    </location>
</feature>
<feature type="helix" evidence="3">
    <location>
        <begin position="6"/>
        <end position="15"/>
    </location>
</feature>
<feature type="turn" evidence="3">
    <location>
        <begin position="19"/>
        <end position="21"/>
    </location>
</feature>
<feature type="strand" evidence="3">
    <location>
        <begin position="26"/>
        <end position="30"/>
    </location>
</feature>
<feature type="strand" evidence="3">
    <location>
        <begin position="33"/>
        <end position="37"/>
    </location>
</feature>
<feature type="helix" evidence="3">
    <location>
        <begin position="42"/>
        <end position="57"/>
    </location>
</feature>
<feature type="strand" evidence="3">
    <location>
        <begin position="68"/>
        <end position="71"/>
    </location>
</feature>
<feature type="strand" evidence="3">
    <location>
        <begin position="73"/>
        <end position="76"/>
    </location>
</feature>
<feature type="strand" evidence="3">
    <location>
        <begin position="83"/>
        <end position="92"/>
    </location>
</feature>
<feature type="helix" evidence="3">
    <location>
        <begin position="104"/>
        <end position="113"/>
    </location>
</feature>
<feature type="helix" evidence="3">
    <location>
        <begin position="115"/>
        <end position="119"/>
    </location>
</feature>
<feature type="strand" evidence="3">
    <location>
        <begin position="121"/>
        <end position="129"/>
    </location>
</feature>
<feature type="strand" evidence="3">
    <location>
        <begin position="135"/>
        <end position="144"/>
    </location>
</feature>
<feature type="helix" evidence="3">
    <location>
        <begin position="145"/>
        <end position="148"/>
    </location>
</feature>
<feature type="strand" evidence="3">
    <location>
        <begin position="153"/>
        <end position="157"/>
    </location>
</feature>
<feature type="strand" evidence="3">
    <location>
        <begin position="159"/>
        <end position="162"/>
    </location>
</feature>
<feature type="strand" evidence="3">
    <location>
        <begin position="165"/>
        <end position="169"/>
    </location>
</feature>
<feature type="helix" evidence="3">
    <location>
        <begin position="188"/>
        <end position="201"/>
    </location>
</feature>
<feature type="turn" evidence="3">
    <location>
        <begin position="203"/>
        <end position="205"/>
    </location>
</feature>
<feature type="helix" evidence="3">
    <location>
        <begin position="206"/>
        <end position="208"/>
    </location>
</feature>
<feature type="strand" evidence="3">
    <location>
        <begin position="209"/>
        <end position="211"/>
    </location>
</feature>
<feature type="helix" evidence="3">
    <location>
        <begin position="212"/>
        <end position="224"/>
    </location>
</feature>
<feature type="helix" evidence="3">
    <location>
        <begin position="233"/>
        <end position="236"/>
    </location>
</feature>
<feature type="helix" evidence="3">
    <location>
        <begin position="237"/>
        <end position="239"/>
    </location>
</feature>
<proteinExistence type="evidence at protein level"/>
<reference key="1">
    <citation type="journal article" date="1994" name="Mol. Gen. Genet.">
        <title>The NlaIV restriction and modification genes of Neisseria lactamica are flanked by leucine biosynthesis genes.</title>
        <authorList>
            <person name="Lau P.C.K."/>
            <person name="Forghani F."/>
            <person name="Labbe D."/>
            <person name="Bergeron H."/>
            <person name="Brousseau R."/>
            <person name="Holtke H.J."/>
        </authorList>
    </citation>
    <scope>NUCLEOTIDE SEQUENCE [GENOMIC DNA]</scope>
    <source>
        <strain>ATCC 23970 / DSM 4691 / CCUG 5853 / CIP 72.17 / NCTC 10617 / NCDC A7515</strain>
    </source>
</reference>
<reference key="2">
    <citation type="journal article" date="1994" name="Mol. Gen. Genet.">
        <authorList>
            <person name="Lau P.C.K."/>
            <person name="Forghani F."/>
            <person name="Labbe D."/>
            <person name="Bergeron H."/>
            <person name="Brousseau R."/>
            <person name="Holtke H.J."/>
        </authorList>
    </citation>
    <scope>ERRATUM OF PUBMED:8190068</scope>
</reference>
<reference key="3">
    <citation type="journal article" date="2003" name="Nucleic Acids Res.">
        <title>A nomenclature for restriction enzymes, DNA methyltransferases, homing endonucleases and their genes.</title>
        <authorList>
            <person name="Roberts R.J."/>
            <person name="Belfort M."/>
            <person name="Bestor T."/>
            <person name="Bhagwat A.S."/>
            <person name="Bickle T.A."/>
            <person name="Bitinaite J."/>
            <person name="Blumenthal R.M."/>
            <person name="Degtyarev S.K."/>
            <person name="Dryden D.T."/>
            <person name="Dybvig K."/>
            <person name="Firman K."/>
            <person name="Gromova E.S."/>
            <person name="Gumport R.I."/>
            <person name="Halford S.E."/>
            <person name="Hattman S."/>
            <person name="Heitman J."/>
            <person name="Hornby D.P."/>
            <person name="Janulaitis A."/>
            <person name="Jeltsch A."/>
            <person name="Josephsen J."/>
            <person name="Kiss A."/>
            <person name="Klaenhammer T.R."/>
            <person name="Kobayashi I."/>
            <person name="Kong H."/>
            <person name="Krueger D.H."/>
            <person name="Lacks S."/>
            <person name="Marinus M.G."/>
            <person name="Miyahara M."/>
            <person name="Morgan R.D."/>
            <person name="Murray N.E."/>
            <person name="Nagaraja V."/>
            <person name="Piekarowicz A."/>
            <person name="Pingoud A."/>
            <person name="Raleigh E."/>
            <person name="Rao D.N."/>
            <person name="Reich N."/>
            <person name="Repin V.E."/>
            <person name="Selker E.U."/>
            <person name="Shaw P.C."/>
            <person name="Stein D.C."/>
            <person name="Stoddard B.L."/>
            <person name="Szybalski W."/>
            <person name="Trautner T.A."/>
            <person name="Van Etten J.L."/>
            <person name="Vitor J.M."/>
            <person name="Wilson G.G."/>
            <person name="Xu S.Y."/>
        </authorList>
    </citation>
    <scope>NOMENCLATURE</scope>
    <scope>SUBTYPE</scope>
</reference>
<evidence type="ECO:0000303" key="1">
    <source>
    </source>
</evidence>
<evidence type="ECO:0000303" key="2">
    <source>
    </source>
</evidence>
<evidence type="ECO:0007829" key="3">
    <source>
        <dbReference type="PDB" id="6QM2"/>
    </source>
</evidence>
<keyword id="KW-0002">3D-structure</keyword>
<keyword id="KW-0255">Endonuclease</keyword>
<keyword id="KW-0378">Hydrolase</keyword>
<keyword id="KW-0540">Nuclease</keyword>
<keyword id="KW-0680">Restriction system</keyword>
<organism>
    <name type="scientific">Neisseria lactamica</name>
    <dbReference type="NCBI Taxonomy" id="486"/>
    <lineage>
        <taxon>Bacteria</taxon>
        <taxon>Pseudomonadati</taxon>
        <taxon>Pseudomonadota</taxon>
        <taxon>Betaproteobacteria</taxon>
        <taxon>Neisseriales</taxon>
        <taxon>Neisseriaceae</taxon>
        <taxon>Neisseria</taxon>
    </lineage>
</organism>
<accession>P50183</accession>
<dbReference type="EC" id="3.1.21.4"/>
<dbReference type="EMBL" id="U06074">
    <property type="protein sequence ID" value="AAA53238.1"/>
    <property type="molecule type" value="Genomic_DNA"/>
</dbReference>
<dbReference type="PIR" id="S43887">
    <property type="entry name" value="S43887"/>
</dbReference>
<dbReference type="RefSeq" id="WP_003708504.1">
    <property type="nucleotide sequence ID" value="NZ_QQML01000002.1"/>
</dbReference>
<dbReference type="PDB" id="6QM2">
    <property type="method" value="X-ray"/>
    <property type="resolution" value="2.80 A"/>
    <property type="chains" value="A=1-243"/>
</dbReference>
<dbReference type="PDBsum" id="6QM2"/>
<dbReference type="SMR" id="P50183"/>
<dbReference type="STRING" id="486.B2G52_08330"/>
<dbReference type="REBASE" id="1342">
    <property type="entry name" value="NlaIV"/>
</dbReference>
<dbReference type="PRO" id="PR:P50183"/>
<dbReference type="GO" id="GO:0009036">
    <property type="term" value="F:type II site-specific deoxyribonuclease activity"/>
    <property type="evidence" value="ECO:0007669"/>
    <property type="project" value="UniProtKB-EC"/>
</dbReference>
<dbReference type="GO" id="GO:0009307">
    <property type="term" value="P:DNA restriction-modification system"/>
    <property type="evidence" value="ECO:0007669"/>
    <property type="project" value="UniProtKB-KW"/>
</dbReference>
<dbReference type="InterPro" id="IPR019064">
    <property type="entry name" value="Restrct_endonuc_II_NlaIV"/>
</dbReference>
<dbReference type="Pfam" id="PF09564">
    <property type="entry name" value="RE_NgoBV"/>
    <property type="match status" value="1"/>
</dbReference>
<name>T2N4_NEILA</name>
<comment type="function">
    <text evidence="1">A P subtype restriction enzyme that recognizes the double-stranded sequence 5'-GGNNCC-3' and cleaves after N-3.</text>
</comment>
<comment type="catalytic activity">
    <reaction>
        <text>Endonucleolytic cleavage of DNA to give specific double-stranded fragments with terminal 5'-phosphates.</text>
        <dbReference type="EC" id="3.1.21.4"/>
    </reaction>
</comment>
<gene>
    <name type="primary">nlaIVR</name>
</gene>